<name>TXE03_LYCSI</name>
<feature type="signal peptide" evidence="2">
    <location>
        <begin position="1"/>
        <end position="20"/>
    </location>
</feature>
<feature type="chain" id="PRO_0000401879" description="U14-lycotoxin-Ls1b">
    <location>
        <begin position="21"/>
        <end position="87"/>
    </location>
</feature>
<feature type="domain" description="WAP">
    <location>
        <begin position="21"/>
        <end position="66"/>
    </location>
</feature>
<feature type="disulfide bond" evidence="1">
    <location>
        <begin position="24"/>
        <end position="54"/>
    </location>
</feature>
<feature type="disulfide bond" evidence="1">
    <location>
        <begin position="32"/>
        <end position="58"/>
    </location>
</feature>
<feature type="disulfide bond" evidence="1">
    <location>
        <begin position="41"/>
        <end position="53"/>
    </location>
</feature>
<feature type="disulfide bond" evidence="3">
    <location>
        <begin position="42"/>
        <end position="80"/>
    </location>
</feature>
<feature type="disulfide bond" evidence="1">
    <location>
        <begin position="47"/>
        <end position="62"/>
    </location>
</feature>
<organism>
    <name type="scientific">Lycosa singoriensis</name>
    <name type="common">Wolf spider</name>
    <name type="synonym">Aranea singoriensis</name>
    <dbReference type="NCBI Taxonomy" id="434756"/>
    <lineage>
        <taxon>Eukaryota</taxon>
        <taxon>Metazoa</taxon>
        <taxon>Ecdysozoa</taxon>
        <taxon>Arthropoda</taxon>
        <taxon>Chelicerata</taxon>
        <taxon>Arachnida</taxon>
        <taxon>Araneae</taxon>
        <taxon>Araneomorphae</taxon>
        <taxon>Entelegynae</taxon>
        <taxon>Lycosoidea</taxon>
        <taxon>Lycosidae</taxon>
        <taxon>Lycosa</taxon>
    </lineage>
</organism>
<comment type="function">
    <text evidence="1">Has antibacterial activity.</text>
</comment>
<comment type="subcellular location">
    <subcellularLocation>
        <location evidence="1">Secreted</location>
    </subcellularLocation>
</comment>
<comment type="tissue specificity">
    <text>Expressed by the venom gland.</text>
</comment>
<comment type="PTM">
    <text evidence="3">Contains 5 disulfide bonds.</text>
</comment>
<comment type="similarity">
    <text evidence="3">Belongs to the venom protein 11 family. 01 (wap-1) subfamily.</text>
</comment>
<accession>B6DD36</accession>
<reference key="1">
    <citation type="journal article" date="2010" name="Zoology">
        <title>Transcriptome analysis of the venom glands of the Chinese wolf spider Lycosa singoriensis.</title>
        <authorList>
            <person name="Zhang Y."/>
            <person name="Chen J."/>
            <person name="Tang X."/>
            <person name="Wang F."/>
            <person name="Jiang L."/>
            <person name="Xiong X."/>
            <person name="Wang M."/>
            <person name="Rong M."/>
            <person name="Liu Z."/>
            <person name="Liang S."/>
        </authorList>
    </citation>
    <scope>NUCLEOTIDE SEQUENCE [LARGE SCALE MRNA]</scope>
    <source>
        <tissue>Venom gland</tissue>
    </source>
</reference>
<sequence length="87" mass="9637">MNSKVFVVLLLLALSTCVLSEKYCPTPRNTSCKKMNIRNNCCRDSDCTSNAFCCAEPCGNFCHKASDKPGGRRVDPNASCKTGYVYW</sequence>
<proteinExistence type="evidence at transcript level"/>
<protein>
    <recommendedName>
        <fullName>U14-lycotoxin-Ls1b</fullName>
    </recommendedName>
    <alternativeName>
        <fullName>Toxin-like structure LSTX-N3</fullName>
    </alternativeName>
</protein>
<keyword id="KW-0044">Antibiotic</keyword>
<keyword id="KW-0929">Antimicrobial</keyword>
<keyword id="KW-1015">Disulfide bond</keyword>
<keyword id="KW-0964">Secreted</keyword>
<keyword id="KW-0732">Signal</keyword>
<keyword id="KW-0800">Toxin</keyword>
<evidence type="ECO:0000250" key="1"/>
<evidence type="ECO:0000255" key="2"/>
<evidence type="ECO:0000305" key="3"/>
<dbReference type="EMBL" id="EU926120">
    <property type="protein sequence ID" value="ACI41452.1"/>
    <property type="molecule type" value="mRNA"/>
</dbReference>
<dbReference type="EMBL" id="FM864124">
    <property type="protein sequence ID" value="CAS03721.1"/>
    <property type="molecule type" value="mRNA"/>
</dbReference>
<dbReference type="SMR" id="B6DD36"/>
<dbReference type="ArachnoServer" id="AS001059">
    <property type="toxin name" value="U14-lycotoxin-Ls1b"/>
</dbReference>
<dbReference type="GO" id="GO:0005576">
    <property type="term" value="C:extracellular region"/>
    <property type="evidence" value="ECO:0007669"/>
    <property type="project" value="UniProtKB-SubCell"/>
</dbReference>
<dbReference type="GO" id="GO:0090729">
    <property type="term" value="F:toxin activity"/>
    <property type="evidence" value="ECO:0007669"/>
    <property type="project" value="UniProtKB-KW"/>
</dbReference>
<dbReference type="GO" id="GO:0042742">
    <property type="term" value="P:defense response to bacterium"/>
    <property type="evidence" value="ECO:0007669"/>
    <property type="project" value="UniProtKB-KW"/>
</dbReference>
<dbReference type="InterPro" id="IPR036645">
    <property type="entry name" value="Elafin-like_sf"/>
</dbReference>
<dbReference type="SUPFAM" id="SSF57256">
    <property type="entry name" value="Elafin-like"/>
    <property type="match status" value="1"/>
</dbReference>